<proteinExistence type="inferred from homology"/>
<keyword id="KW-0687">Ribonucleoprotein</keyword>
<keyword id="KW-0689">Ribosomal protein</keyword>
<sequence length="61" mass="7025">MNAAELRKLSAEQLKDKLAESRKELFDMRFRHATAQLEKTSNLPATKRDIARILTILKEKG</sequence>
<gene>
    <name evidence="1" type="primary">rpmC</name>
    <name type="ordered locus">DvMF_0087</name>
</gene>
<accession>B8DNA4</accession>
<comment type="similarity">
    <text evidence="1">Belongs to the universal ribosomal protein uL29 family.</text>
</comment>
<dbReference type="EMBL" id="CP001197">
    <property type="protein sequence ID" value="ACL07048.1"/>
    <property type="molecule type" value="Genomic_DNA"/>
</dbReference>
<dbReference type="SMR" id="B8DNA4"/>
<dbReference type="STRING" id="883.DvMF_0087"/>
<dbReference type="KEGG" id="dvm:DvMF_0087"/>
<dbReference type="eggNOG" id="COG0255">
    <property type="taxonomic scope" value="Bacteria"/>
</dbReference>
<dbReference type="HOGENOM" id="CLU_158491_5_2_7"/>
<dbReference type="OrthoDB" id="9815192at2"/>
<dbReference type="GO" id="GO:0022625">
    <property type="term" value="C:cytosolic large ribosomal subunit"/>
    <property type="evidence" value="ECO:0007669"/>
    <property type="project" value="TreeGrafter"/>
</dbReference>
<dbReference type="GO" id="GO:0003735">
    <property type="term" value="F:structural constituent of ribosome"/>
    <property type="evidence" value="ECO:0007669"/>
    <property type="project" value="InterPro"/>
</dbReference>
<dbReference type="GO" id="GO:0006412">
    <property type="term" value="P:translation"/>
    <property type="evidence" value="ECO:0007669"/>
    <property type="project" value="UniProtKB-UniRule"/>
</dbReference>
<dbReference type="CDD" id="cd00427">
    <property type="entry name" value="Ribosomal_L29_HIP"/>
    <property type="match status" value="1"/>
</dbReference>
<dbReference type="FunFam" id="1.10.287.310:FF:000001">
    <property type="entry name" value="50S ribosomal protein L29"/>
    <property type="match status" value="1"/>
</dbReference>
<dbReference type="Gene3D" id="1.10.287.310">
    <property type="match status" value="1"/>
</dbReference>
<dbReference type="HAMAP" id="MF_00374">
    <property type="entry name" value="Ribosomal_uL29"/>
    <property type="match status" value="1"/>
</dbReference>
<dbReference type="InterPro" id="IPR050063">
    <property type="entry name" value="Ribosomal_protein_uL29"/>
</dbReference>
<dbReference type="InterPro" id="IPR001854">
    <property type="entry name" value="Ribosomal_uL29"/>
</dbReference>
<dbReference type="InterPro" id="IPR036049">
    <property type="entry name" value="Ribosomal_uL29_sf"/>
</dbReference>
<dbReference type="NCBIfam" id="TIGR00012">
    <property type="entry name" value="L29"/>
    <property type="match status" value="1"/>
</dbReference>
<dbReference type="PANTHER" id="PTHR10916">
    <property type="entry name" value="60S RIBOSOMAL PROTEIN L35/50S RIBOSOMAL PROTEIN L29"/>
    <property type="match status" value="1"/>
</dbReference>
<dbReference type="PANTHER" id="PTHR10916:SF0">
    <property type="entry name" value="LARGE RIBOSOMAL SUBUNIT PROTEIN UL29C"/>
    <property type="match status" value="1"/>
</dbReference>
<dbReference type="Pfam" id="PF00831">
    <property type="entry name" value="Ribosomal_L29"/>
    <property type="match status" value="1"/>
</dbReference>
<dbReference type="SUPFAM" id="SSF46561">
    <property type="entry name" value="Ribosomal protein L29 (L29p)"/>
    <property type="match status" value="1"/>
</dbReference>
<name>RL29_NITV9</name>
<organism>
    <name type="scientific">Nitratidesulfovibrio vulgaris (strain DSM 19637 / Miyazaki F)</name>
    <name type="common">Desulfovibrio vulgaris</name>
    <dbReference type="NCBI Taxonomy" id="883"/>
    <lineage>
        <taxon>Bacteria</taxon>
        <taxon>Pseudomonadati</taxon>
        <taxon>Thermodesulfobacteriota</taxon>
        <taxon>Desulfovibrionia</taxon>
        <taxon>Desulfovibrionales</taxon>
        <taxon>Desulfovibrionaceae</taxon>
        <taxon>Nitratidesulfovibrio</taxon>
    </lineage>
</organism>
<feature type="chain" id="PRO_1000121763" description="Large ribosomal subunit protein uL29">
    <location>
        <begin position="1"/>
        <end position="61"/>
    </location>
</feature>
<reference key="1">
    <citation type="submission" date="2008-10" db="EMBL/GenBank/DDBJ databases">
        <title>Complete sequence of Desulfovibrio vulgaris str. 'Miyazaki F'.</title>
        <authorList>
            <person name="Lucas S."/>
            <person name="Copeland A."/>
            <person name="Lapidus A."/>
            <person name="Glavina del Rio T."/>
            <person name="Dalin E."/>
            <person name="Tice H."/>
            <person name="Bruce D."/>
            <person name="Goodwin L."/>
            <person name="Pitluck S."/>
            <person name="Sims D."/>
            <person name="Brettin T."/>
            <person name="Detter J.C."/>
            <person name="Han C."/>
            <person name="Larimer F."/>
            <person name="Land M."/>
            <person name="Hauser L."/>
            <person name="Kyrpides N."/>
            <person name="Mikhailova N."/>
            <person name="Hazen T.C."/>
            <person name="Richardson P."/>
        </authorList>
    </citation>
    <scope>NUCLEOTIDE SEQUENCE [LARGE SCALE GENOMIC DNA]</scope>
    <source>
        <strain>DSM 19637 / Miyazaki F</strain>
    </source>
</reference>
<evidence type="ECO:0000255" key="1">
    <source>
        <dbReference type="HAMAP-Rule" id="MF_00374"/>
    </source>
</evidence>
<evidence type="ECO:0000305" key="2"/>
<protein>
    <recommendedName>
        <fullName evidence="1">Large ribosomal subunit protein uL29</fullName>
    </recommendedName>
    <alternativeName>
        <fullName evidence="2">50S ribosomal protein L29</fullName>
    </alternativeName>
</protein>